<sequence>MVTEDFYKYQVWYFQILGVWQLPTWAADHQRRFQSMRFGFILVILFIMLLLFSFEMLNNISQVREILKVFFMFATEISCMAKLLHLKLKSRKLAGLVDAMLSPEFGVKSEQEMQMLELDRVAVVRMRNSYGIMSLGAASLILIVPCFDNFGELPLAMLEVCSIEGWICYWSQYLFHSICLLPTCVLNITYDSVAYSLLCFLKVQLQMLVLRLEKLGPVIEPQDNEKIAMELRECAAYYNRIVRFKDLVELFIKGPGSVQLMCSVLVLVSNLYDMSTMSIANGDAIFMLKTCIYQLVMLWQIFIICYASNEVTVQSSRLCHSIYSSQWTGWNRANRRIVLLMMQRFNSPMLLSTFNPTFAFSLEAFGSIVNCSYSYFALLKRVNS</sequence>
<dbReference type="EMBL" id="AE013599">
    <property type="protein sequence ID" value="AAM68774.1"/>
    <property type="molecule type" value="Genomic_DNA"/>
</dbReference>
<dbReference type="RefSeq" id="NP_995793.1">
    <molecule id="Q9V3N2-1"/>
    <property type="nucleotide sequence ID" value="NM_206071.2"/>
</dbReference>
<dbReference type="SMR" id="Q9V3N2"/>
<dbReference type="FunCoup" id="Q9V3N2">
    <property type="interactions" value="36"/>
</dbReference>
<dbReference type="IntAct" id="Q9V3N2">
    <property type="interactions" value="1"/>
</dbReference>
<dbReference type="STRING" id="7227.FBpp0089408"/>
<dbReference type="GlyCosmos" id="Q9V3N2">
    <property type="glycosylation" value="2 sites, No reported glycans"/>
</dbReference>
<dbReference type="GlyGen" id="Q9V3N2">
    <property type="glycosylation" value="2 sites"/>
</dbReference>
<dbReference type="PaxDb" id="7227-FBpp0089408"/>
<dbReference type="EnsemblMetazoa" id="FBtr0088331">
    <molecule id="Q9V3N2-1"/>
    <property type="protein sequence ID" value="FBpp0089408"/>
    <property type="gene ID" value="FBgn0026388"/>
</dbReference>
<dbReference type="GeneID" id="2768728"/>
<dbReference type="KEGG" id="dme:Dmel_CG33478"/>
<dbReference type="AGR" id="FB:FBgn0026388"/>
<dbReference type="CTD" id="2768728"/>
<dbReference type="FlyBase" id="FBgn0026388">
    <property type="gene designation" value="Or46a"/>
</dbReference>
<dbReference type="VEuPathDB" id="VectorBase:FBgn0026388"/>
<dbReference type="eggNOG" id="ENOG502SV87">
    <property type="taxonomic scope" value="Eukaryota"/>
</dbReference>
<dbReference type="GeneTree" id="ENSGT00530000064740"/>
<dbReference type="HOGENOM" id="CLU_033399_6_3_1"/>
<dbReference type="InParanoid" id="Q9V3N2"/>
<dbReference type="OrthoDB" id="5846619at2759"/>
<dbReference type="PhylomeDB" id="Q9V3N2"/>
<dbReference type="BioGRID-ORCS" id="2768728">
    <property type="hits" value="0 hits in 1 CRISPR screen"/>
</dbReference>
<dbReference type="GenomeRNAi" id="2768728"/>
<dbReference type="Proteomes" id="UP000000803">
    <property type="component" value="Chromosome 2R"/>
</dbReference>
<dbReference type="Bgee" id="FBgn0026388">
    <property type="expression patterns" value="Expressed in maxillary palp olfactory receptor neuron (Drosophila) in proboscis and 4 other cell types or tissues"/>
</dbReference>
<dbReference type="ExpressionAtlas" id="Q9V3N2">
    <property type="expression patterns" value="differential"/>
</dbReference>
<dbReference type="GO" id="GO:0032590">
    <property type="term" value="C:dendrite membrane"/>
    <property type="evidence" value="ECO:0000250"/>
    <property type="project" value="FlyBase"/>
</dbReference>
<dbReference type="GO" id="GO:0016020">
    <property type="term" value="C:membrane"/>
    <property type="evidence" value="ECO:0000303"/>
    <property type="project" value="UniProtKB"/>
</dbReference>
<dbReference type="GO" id="GO:0005886">
    <property type="term" value="C:plasma membrane"/>
    <property type="evidence" value="ECO:0000255"/>
    <property type="project" value="FlyBase"/>
</dbReference>
<dbReference type="GO" id="GO:0005549">
    <property type="term" value="F:odorant binding"/>
    <property type="evidence" value="ECO:0000250"/>
    <property type="project" value="FlyBase"/>
</dbReference>
<dbReference type="GO" id="GO:0004984">
    <property type="term" value="F:olfactory receptor activity"/>
    <property type="evidence" value="ECO:0000315"/>
    <property type="project" value="FlyBase"/>
</dbReference>
<dbReference type="GO" id="GO:0050911">
    <property type="term" value="P:detection of chemical stimulus involved in sensory perception of smell"/>
    <property type="evidence" value="ECO:0000315"/>
    <property type="project" value="FlyBase"/>
</dbReference>
<dbReference type="GO" id="GO:0007608">
    <property type="term" value="P:sensory perception of smell"/>
    <property type="evidence" value="ECO:0000250"/>
    <property type="project" value="FlyBase"/>
</dbReference>
<dbReference type="GO" id="GO:0007165">
    <property type="term" value="P:signal transduction"/>
    <property type="evidence" value="ECO:0007669"/>
    <property type="project" value="UniProtKB-KW"/>
</dbReference>
<dbReference type="InterPro" id="IPR004117">
    <property type="entry name" value="7tm6_olfct_rcpt"/>
</dbReference>
<dbReference type="PANTHER" id="PTHR21137">
    <property type="entry name" value="ODORANT RECEPTOR"/>
    <property type="match status" value="1"/>
</dbReference>
<dbReference type="PANTHER" id="PTHR21137:SF37">
    <property type="entry name" value="ODORANT RECEPTOR 46A, ISOFORM B-RELATED"/>
    <property type="match status" value="1"/>
</dbReference>
<dbReference type="Pfam" id="PF02949">
    <property type="entry name" value="7tm_6"/>
    <property type="match status" value="1"/>
</dbReference>
<accession>Q9V3N2</accession>
<accession>P81920</accession>
<organism>
    <name type="scientific">Drosophila melanogaster</name>
    <name type="common">Fruit fly</name>
    <dbReference type="NCBI Taxonomy" id="7227"/>
    <lineage>
        <taxon>Eukaryota</taxon>
        <taxon>Metazoa</taxon>
        <taxon>Ecdysozoa</taxon>
        <taxon>Arthropoda</taxon>
        <taxon>Hexapoda</taxon>
        <taxon>Insecta</taxon>
        <taxon>Pterygota</taxon>
        <taxon>Neoptera</taxon>
        <taxon>Endopterygota</taxon>
        <taxon>Diptera</taxon>
        <taxon>Brachycera</taxon>
        <taxon>Muscomorpha</taxon>
        <taxon>Ephydroidea</taxon>
        <taxon>Drosophilidae</taxon>
        <taxon>Drosophila</taxon>
        <taxon>Sophophora</taxon>
    </lineage>
</organism>
<gene>
    <name type="primary">Or46a</name>
    <name type="synonym">AN8</name>
    <name type="synonym">AN9</name>
    <name type="synonym">dor19</name>
    <name type="synonym">DOR46F</name>
    <name type="synonym">DOR46F.1</name>
    <name type="synonym">Or46b</name>
    <name type="synonym">OR46F</name>
    <name type="synonym">Or46F.1</name>
    <name type="synonym">Or46F.2</name>
    <name type="ORF">CG33478</name>
</gene>
<keyword id="KW-0025">Alternative splicing</keyword>
<keyword id="KW-1003">Cell membrane</keyword>
<keyword id="KW-0325">Glycoprotein</keyword>
<keyword id="KW-0472">Membrane</keyword>
<keyword id="KW-0552">Olfaction</keyword>
<keyword id="KW-0675">Receptor</keyword>
<keyword id="KW-1185">Reference proteome</keyword>
<keyword id="KW-0716">Sensory transduction</keyword>
<keyword id="KW-0807">Transducer</keyword>
<keyword id="KW-0812">Transmembrane</keyword>
<keyword id="KW-1133">Transmembrane helix</keyword>
<protein>
    <recommendedName>
        <fullName>Odorant receptor 46a, isoform B</fullName>
    </recommendedName>
</protein>
<proteinExistence type="evidence at transcript level"/>
<feature type="chain" id="PRO_0000174249" description="Odorant receptor 46a, isoform B">
    <location>
        <begin position="1"/>
        <end position="384"/>
    </location>
</feature>
<feature type="topological domain" description="Cytoplasmic" evidence="2">
    <location>
        <begin position="1"/>
        <end position="37"/>
    </location>
</feature>
<feature type="transmembrane region" description="Helical; Name=1" evidence="2">
    <location>
        <begin position="38"/>
        <end position="58"/>
    </location>
</feature>
<feature type="topological domain" description="Extracellular" evidence="2">
    <location>
        <begin position="59"/>
        <end position="65"/>
    </location>
</feature>
<feature type="transmembrane region" description="Helical; Name=2" evidence="2">
    <location>
        <begin position="66"/>
        <end position="86"/>
    </location>
</feature>
<feature type="topological domain" description="Cytoplasmic" evidence="2">
    <location>
        <begin position="87"/>
        <end position="130"/>
    </location>
</feature>
<feature type="transmembrane region" description="Helical; Name=3" evidence="2">
    <location>
        <begin position="131"/>
        <end position="151"/>
    </location>
</feature>
<feature type="topological domain" description="Extracellular" evidence="2">
    <location>
        <begin position="152"/>
        <end position="165"/>
    </location>
</feature>
<feature type="transmembrane region" description="Helical; Name=4" evidence="2">
    <location>
        <begin position="166"/>
        <end position="186"/>
    </location>
</feature>
<feature type="topological domain" description="Cytoplasmic" evidence="2">
    <location>
        <begin position="187"/>
        <end position="247"/>
    </location>
</feature>
<feature type="transmembrane region" description="Helical; Name=5" evidence="2">
    <location>
        <begin position="248"/>
        <end position="268"/>
    </location>
</feature>
<feature type="topological domain" description="Extracellular" evidence="2">
    <location>
        <begin position="269"/>
        <end position="283"/>
    </location>
</feature>
<feature type="transmembrane region" description="Helical; Name=6" evidence="2">
    <location>
        <begin position="284"/>
        <end position="304"/>
    </location>
</feature>
<feature type="topological domain" description="Cytoplasmic" evidence="2">
    <location>
        <begin position="305"/>
        <end position="348"/>
    </location>
</feature>
<feature type="transmembrane region" description="Helical; Name=7" evidence="2">
    <location>
        <begin position="349"/>
        <end position="369"/>
    </location>
</feature>
<feature type="topological domain" description="Extracellular" evidence="2">
    <location>
        <begin position="370"/>
        <end position="384"/>
    </location>
</feature>
<feature type="glycosylation site" description="N-linked (GlcNAc...) asparagine" evidence="2">
    <location>
        <position position="59"/>
    </location>
</feature>
<feature type="glycosylation site" description="N-linked (GlcNAc...) asparagine" evidence="2">
    <location>
        <position position="370"/>
    </location>
</feature>
<comment type="function">
    <text evidence="1">Odorant receptor which mediates acceptance or avoidance behavior, depending on its substrates. The odorant receptor repertoire encodes a large collection of odor stimuli that vary widely in identity, intensity, and duration. May form a complex with Orco to form odorant-sensing units, providing sensitive and prolonged odorant signaling and calcium permeability (By similarity).</text>
</comment>
<comment type="subunit">
    <text evidence="1">Interacts with Orco. Complexes exist early in the endomembrane system in olfactory sensory neurons (OSNs), coupling these complexes to the conserved ciliary trafficking pathway (By similarity).</text>
</comment>
<comment type="subcellular location">
    <subcellularLocation>
        <location evidence="1">Cell membrane</location>
        <topology evidence="1">Multi-pass membrane protein</topology>
    </subcellularLocation>
</comment>
<comment type="alternative products">
    <event type="alternative splicing"/>
    <isoform>
        <id>Q9V3N2-1</id>
        <name>B</name>
        <sequence type="displayed"/>
    </isoform>
    <isoform>
        <id>P81919-1</id>
        <name>A</name>
        <sequence type="external"/>
    </isoform>
</comment>
<comment type="tissue specificity">
    <text evidence="3">Isoform B is expressed in the antenna.</text>
</comment>
<comment type="miscellaneous">
    <text>The atypical heteromeric and topological design of the odorant receptors appears to be an insect-specific solution for odor recognition, making the OR/Orco complex an attractive target for the development of highly selective insect repellents to disrupt olfactory-mediated host-seeking behaviors of insect disease vectors. Odor-evoked OR currents are independent of known G-protein-coupled second messenger pathways.</text>
</comment>
<comment type="similarity">
    <text evidence="4">Belongs to the insect chemoreceptor superfamily. Heteromeric odorant receptor channel (TC 1.A.69) family. Or2a subfamily.</text>
</comment>
<evidence type="ECO:0000250" key="1"/>
<evidence type="ECO:0000255" key="2"/>
<evidence type="ECO:0000269" key="3">
    <source>
    </source>
</evidence>
<evidence type="ECO:0000305" key="4"/>
<reference key="1">
    <citation type="journal article" date="1999" name="Genomics">
        <title>Identification of candidate Drosophila olfactory receptors from genomic DNA sequence.</title>
        <authorList>
            <person name="Gao Q."/>
            <person name="Chess A."/>
        </authorList>
    </citation>
    <scope>NUCLEOTIDE SEQUENCE [GENOMIC DNA]</scope>
</reference>
<reference key="2">
    <citation type="journal article" date="2000" name="Science">
        <title>The genome sequence of Drosophila melanogaster.</title>
        <authorList>
            <person name="Adams M.D."/>
            <person name="Celniker S.E."/>
            <person name="Holt R.A."/>
            <person name="Evans C.A."/>
            <person name="Gocayne J.D."/>
            <person name="Amanatides P.G."/>
            <person name="Scherer S.E."/>
            <person name="Li P.W."/>
            <person name="Hoskins R.A."/>
            <person name="Galle R.F."/>
            <person name="George R.A."/>
            <person name="Lewis S.E."/>
            <person name="Richards S."/>
            <person name="Ashburner M."/>
            <person name="Henderson S.N."/>
            <person name="Sutton G.G."/>
            <person name="Wortman J.R."/>
            <person name="Yandell M.D."/>
            <person name="Zhang Q."/>
            <person name="Chen L.X."/>
            <person name="Brandon R.C."/>
            <person name="Rogers Y.-H.C."/>
            <person name="Blazej R.G."/>
            <person name="Champe M."/>
            <person name="Pfeiffer B.D."/>
            <person name="Wan K.H."/>
            <person name="Doyle C."/>
            <person name="Baxter E.G."/>
            <person name="Helt G."/>
            <person name="Nelson C.R."/>
            <person name="Miklos G.L.G."/>
            <person name="Abril J.F."/>
            <person name="Agbayani A."/>
            <person name="An H.-J."/>
            <person name="Andrews-Pfannkoch C."/>
            <person name="Baldwin D."/>
            <person name="Ballew R.M."/>
            <person name="Basu A."/>
            <person name="Baxendale J."/>
            <person name="Bayraktaroglu L."/>
            <person name="Beasley E.M."/>
            <person name="Beeson K.Y."/>
            <person name="Benos P.V."/>
            <person name="Berman B.P."/>
            <person name="Bhandari D."/>
            <person name="Bolshakov S."/>
            <person name="Borkova D."/>
            <person name="Botchan M.R."/>
            <person name="Bouck J."/>
            <person name="Brokstein P."/>
            <person name="Brottier P."/>
            <person name="Burtis K.C."/>
            <person name="Busam D.A."/>
            <person name="Butler H."/>
            <person name="Cadieu E."/>
            <person name="Center A."/>
            <person name="Chandra I."/>
            <person name="Cherry J.M."/>
            <person name="Cawley S."/>
            <person name="Dahlke C."/>
            <person name="Davenport L.B."/>
            <person name="Davies P."/>
            <person name="de Pablos B."/>
            <person name="Delcher A."/>
            <person name="Deng Z."/>
            <person name="Mays A.D."/>
            <person name="Dew I."/>
            <person name="Dietz S.M."/>
            <person name="Dodson K."/>
            <person name="Doup L.E."/>
            <person name="Downes M."/>
            <person name="Dugan-Rocha S."/>
            <person name="Dunkov B.C."/>
            <person name="Dunn P."/>
            <person name="Durbin K.J."/>
            <person name="Evangelista C.C."/>
            <person name="Ferraz C."/>
            <person name="Ferriera S."/>
            <person name="Fleischmann W."/>
            <person name="Fosler C."/>
            <person name="Gabrielian A.E."/>
            <person name="Garg N.S."/>
            <person name="Gelbart W.M."/>
            <person name="Glasser K."/>
            <person name="Glodek A."/>
            <person name="Gong F."/>
            <person name="Gorrell J.H."/>
            <person name="Gu Z."/>
            <person name="Guan P."/>
            <person name="Harris M."/>
            <person name="Harris N.L."/>
            <person name="Harvey D.A."/>
            <person name="Heiman T.J."/>
            <person name="Hernandez J.R."/>
            <person name="Houck J."/>
            <person name="Hostin D."/>
            <person name="Houston K.A."/>
            <person name="Howland T.J."/>
            <person name="Wei M.-H."/>
            <person name="Ibegwam C."/>
            <person name="Jalali M."/>
            <person name="Kalush F."/>
            <person name="Karpen G.H."/>
            <person name="Ke Z."/>
            <person name="Kennison J.A."/>
            <person name="Ketchum K.A."/>
            <person name="Kimmel B.E."/>
            <person name="Kodira C.D."/>
            <person name="Kraft C.L."/>
            <person name="Kravitz S."/>
            <person name="Kulp D."/>
            <person name="Lai Z."/>
            <person name="Lasko P."/>
            <person name="Lei Y."/>
            <person name="Levitsky A.A."/>
            <person name="Li J.H."/>
            <person name="Li Z."/>
            <person name="Liang Y."/>
            <person name="Lin X."/>
            <person name="Liu X."/>
            <person name="Mattei B."/>
            <person name="McIntosh T.C."/>
            <person name="McLeod M.P."/>
            <person name="McPherson D."/>
            <person name="Merkulov G."/>
            <person name="Milshina N.V."/>
            <person name="Mobarry C."/>
            <person name="Morris J."/>
            <person name="Moshrefi A."/>
            <person name="Mount S.M."/>
            <person name="Moy M."/>
            <person name="Murphy B."/>
            <person name="Murphy L."/>
            <person name="Muzny D.M."/>
            <person name="Nelson D.L."/>
            <person name="Nelson D.R."/>
            <person name="Nelson K.A."/>
            <person name="Nixon K."/>
            <person name="Nusskern D.R."/>
            <person name="Pacleb J.M."/>
            <person name="Palazzolo M."/>
            <person name="Pittman G.S."/>
            <person name="Pan S."/>
            <person name="Pollard J."/>
            <person name="Puri V."/>
            <person name="Reese M.G."/>
            <person name="Reinert K."/>
            <person name="Remington K."/>
            <person name="Saunders R.D.C."/>
            <person name="Scheeler F."/>
            <person name="Shen H."/>
            <person name="Shue B.C."/>
            <person name="Siden-Kiamos I."/>
            <person name="Simpson M."/>
            <person name="Skupski M.P."/>
            <person name="Smith T.J."/>
            <person name="Spier E."/>
            <person name="Spradling A.C."/>
            <person name="Stapleton M."/>
            <person name="Strong R."/>
            <person name="Sun E."/>
            <person name="Svirskas R."/>
            <person name="Tector C."/>
            <person name="Turner R."/>
            <person name="Venter E."/>
            <person name="Wang A.H."/>
            <person name="Wang X."/>
            <person name="Wang Z.-Y."/>
            <person name="Wassarman D.A."/>
            <person name="Weinstock G.M."/>
            <person name="Weissenbach J."/>
            <person name="Williams S.M."/>
            <person name="Woodage T."/>
            <person name="Worley K.C."/>
            <person name="Wu D."/>
            <person name="Yang S."/>
            <person name="Yao Q.A."/>
            <person name="Ye J."/>
            <person name="Yeh R.-F."/>
            <person name="Zaveri J.S."/>
            <person name="Zhan M."/>
            <person name="Zhang G."/>
            <person name="Zhao Q."/>
            <person name="Zheng L."/>
            <person name="Zheng X.H."/>
            <person name="Zhong F.N."/>
            <person name="Zhong W."/>
            <person name="Zhou X."/>
            <person name="Zhu S.C."/>
            <person name="Zhu X."/>
            <person name="Smith H.O."/>
            <person name="Gibbs R.A."/>
            <person name="Myers E.W."/>
            <person name="Rubin G.M."/>
            <person name="Venter J.C."/>
        </authorList>
    </citation>
    <scope>NUCLEOTIDE SEQUENCE [LARGE SCALE GENOMIC DNA]</scope>
    <source>
        <strain>Berkeley</strain>
    </source>
</reference>
<reference key="3">
    <citation type="journal article" date="2002" name="Genome Biol.">
        <title>Annotation of the Drosophila melanogaster euchromatic genome: a systematic review.</title>
        <authorList>
            <person name="Misra S."/>
            <person name="Crosby M.A."/>
            <person name="Mungall C.J."/>
            <person name="Matthews B.B."/>
            <person name="Campbell K.S."/>
            <person name="Hradecky P."/>
            <person name="Huang Y."/>
            <person name="Kaminker J.S."/>
            <person name="Millburn G.H."/>
            <person name="Prochnik S.E."/>
            <person name="Smith C.D."/>
            <person name="Tupy J.L."/>
            <person name="Whitfield E.J."/>
            <person name="Bayraktaroglu L."/>
            <person name="Berman B.P."/>
            <person name="Bettencourt B.R."/>
            <person name="Celniker S.E."/>
            <person name="de Grey A.D.N.J."/>
            <person name="Drysdale R.A."/>
            <person name="Harris N.L."/>
            <person name="Richter J."/>
            <person name="Russo S."/>
            <person name="Schroeder A.J."/>
            <person name="Shu S.Q."/>
            <person name="Stapleton M."/>
            <person name="Yamada C."/>
            <person name="Ashburner M."/>
            <person name="Gelbart W.M."/>
            <person name="Rubin G.M."/>
            <person name="Lewis S.E."/>
        </authorList>
    </citation>
    <scope>GENOME REANNOTATION</scope>
    <source>
        <strain>Berkeley</strain>
    </source>
</reference>
<reference key="4">
    <citation type="journal article" date="1999" name="Neuron">
        <title>A novel family of divergent seven-transmembrane proteins: candidate odorant receptors in Drosophila.</title>
        <authorList>
            <person name="Clyne P.J."/>
            <person name="Warr C.G."/>
            <person name="Freeman M.R."/>
            <person name="Lessing D."/>
            <person name="Kim J."/>
            <person name="Carlson J.R."/>
        </authorList>
    </citation>
    <scope>IDENTIFICATION</scope>
    <scope>TISSUE SPECIFICITY</scope>
</reference>
<reference key="5">
    <citation type="journal article" date="1999" name="Cell">
        <title>A spatial map of olfactory receptor expression in the Drosophila antenna.</title>
        <authorList>
            <person name="Vosshall L.B."/>
            <person name="Amrein H."/>
            <person name="Morozov P.S."/>
            <person name="Rzhetsky A."/>
            <person name="Axel R."/>
        </authorList>
    </citation>
    <scope>IDENTIFICATION</scope>
    <source>
        <strain>Oregon-R</strain>
        <tissue>Antenna</tissue>
    </source>
</reference>
<reference key="6">
    <citation type="journal article" date="2003" name="Proc. Natl. Acad. Sci. U.S.A.">
        <title>Molecular evolution of the insect chemoreceptor gene superfamily in Drosophila melanogaster.</title>
        <authorList>
            <person name="Robertson H.M."/>
            <person name="Warr C.G."/>
            <person name="Carlson J.R."/>
        </authorList>
    </citation>
    <scope>IDENTIFICATION OF ALTERNATIVE SPLICING</scope>
</reference>
<name>OR46B_DROME</name>